<accession>Q9CWM2</accession>
<accession>Q3U1C0</accession>
<accession>Q921E8</accession>
<accession>Q99MP6</accession>
<proteinExistence type="evidence at transcript level"/>
<feature type="chain" id="PRO_0000191618" description="Cell division cycle-associated protein 4">
    <location>
        <begin position="1"/>
        <end position="237"/>
    </location>
</feature>
<feature type="domain" description="SERTA" evidence="2">
    <location>
        <begin position="26"/>
        <end position="73"/>
    </location>
</feature>
<feature type="sequence conflict" description="In Ref. 3; AAH12953." evidence="3" ref="3">
    <original>S</original>
    <variation>T</variation>
    <location>
        <position position="196"/>
    </location>
</feature>
<feature type="sequence conflict" description="In Ref. 3; AAH12953." evidence="3" ref="3">
    <original>T</original>
    <variation>A</variation>
    <location>
        <position position="213"/>
    </location>
</feature>
<gene>
    <name type="primary">Cdca4</name>
    <name type="synonym">Hepp</name>
</gene>
<sequence length="237" mass="26107">MFARGLKRKYGDQEEGVEGFGTVPSYSLQRQSLLDMSLVKLQLCHMLVEPNLCRSVLIANTVRQIQEEMSQDGVWHGMAPQNVDRAPVERLVSTEILCRTVRGAEEEHPAPELEDAPLQNSVSELPIVGSAPGQRNPQSSLWEMDSPQENRGSFQKSLDQIFETLENKNSSSVEELFSDVDSSYYDLDTVLTGMMSGTKSSLCNGLEGFAAATPPPSSTCKSDLAELDHVVEILVET</sequence>
<keyword id="KW-0539">Nucleus</keyword>
<keyword id="KW-1185">Reference proteome</keyword>
<dbReference type="EMBL" id="AK010535">
    <property type="protein sequence ID" value="BAB27012.2"/>
    <property type="molecule type" value="mRNA"/>
</dbReference>
<dbReference type="EMBL" id="AK156081">
    <property type="protein sequence ID" value="BAE33578.1"/>
    <property type="molecule type" value="mRNA"/>
</dbReference>
<dbReference type="EMBL" id="AF322238">
    <property type="protein sequence ID" value="AAK31074.1"/>
    <property type="molecule type" value="mRNA"/>
</dbReference>
<dbReference type="EMBL" id="AK032980">
    <property type="protein sequence ID" value="BAC28109.1"/>
    <property type="molecule type" value="mRNA"/>
</dbReference>
<dbReference type="EMBL" id="BC012953">
    <property type="protein sequence ID" value="AAH12953.1"/>
    <property type="status" value="ALT_INIT"/>
    <property type="molecule type" value="mRNA"/>
</dbReference>
<dbReference type="EMBL" id="BC055824">
    <property type="protein sequence ID" value="AAH55824.1"/>
    <property type="molecule type" value="mRNA"/>
</dbReference>
<dbReference type="CCDS" id="CCDS26198.1"/>
<dbReference type="RefSeq" id="NP_001346163.1">
    <property type="nucleotide sequence ID" value="NM_001359234.1"/>
</dbReference>
<dbReference type="RefSeq" id="NP_001346221.1">
    <property type="nucleotide sequence ID" value="NM_001359292.1"/>
</dbReference>
<dbReference type="RefSeq" id="NP_082299.1">
    <property type="nucleotide sequence ID" value="NM_028023.4"/>
</dbReference>
<dbReference type="RefSeq" id="XP_006516307.1">
    <property type="nucleotide sequence ID" value="XM_006516244.1"/>
</dbReference>
<dbReference type="FunCoup" id="Q9CWM2">
    <property type="interactions" value="3630"/>
</dbReference>
<dbReference type="STRING" id="10090.ENSMUSP00000058901"/>
<dbReference type="PhosphoSitePlus" id="Q9CWM2"/>
<dbReference type="PaxDb" id="10090-ENSMUSP00000058901"/>
<dbReference type="ProteomicsDB" id="283767"/>
<dbReference type="Antibodypedia" id="28296">
    <property type="antibodies" value="200 antibodies from 27 providers"/>
</dbReference>
<dbReference type="DNASU" id="71963"/>
<dbReference type="Ensembl" id="ENSMUST00000062092.7">
    <property type="protein sequence ID" value="ENSMUSP00000058901.6"/>
    <property type="gene ID" value="ENSMUSG00000047832.10"/>
</dbReference>
<dbReference type="Ensembl" id="ENSMUST00000220899.2">
    <property type="protein sequence ID" value="ENSMUSP00000152315.2"/>
    <property type="gene ID" value="ENSMUSG00000047832.10"/>
</dbReference>
<dbReference type="GeneID" id="71963"/>
<dbReference type="KEGG" id="mmu:71963"/>
<dbReference type="UCSC" id="uc007pfi.1">
    <property type="organism name" value="mouse"/>
</dbReference>
<dbReference type="AGR" id="MGI:1919213"/>
<dbReference type="CTD" id="55038"/>
<dbReference type="MGI" id="MGI:1919213">
    <property type="gene designation" value="Cdca4"/>
</dbReference>
<dbReference type="VEuPathDB" id="HostDB:ENSMUSG00000047832"/>
<dbReference type="eggNOG" id="ENOG502QWNU">
    <property type="taxonomic scope" value="Eukaryota"/>
</dbReference>
<dbReference type="GeneTree" id="ENSGT00530000063867"/>
<dbReference type="HOGENOM" id="CLU_065586_1_0_1"/>
<dbReference type="InParanoid" id="Q9CWM2"/>
<dbReference type="OMA" id="SSVWEMD"/>
<dbReference type="OrthoDB" id="8735401at2759"/>
<dbReference type="PhylomeDB" id="Q9CWM2"/>
<dbReference type="TreeFam" id="TF101069"/>
<dbReference type="BioGRID-ORCS" id="71963">
    <property type="hits" value="4 hits in 80 CRISPR screens"/>
</dbReference>
<dbReference type="ChiTaRS" id="Cdca4">
    <property type="organism name" value="mouse"/>
</dbReference>
<dbReference type="PRO" id="PR:Q9CWM2"/>
<dbReference type="Proteomes" id="UP000000589">
    <property type="component" value="Chromosome 12"/>
</dbReference>
<dbReference type="RNAct" id="Q9CWM2">
    <property type="molecule type" value="protein"/>
</dbReference>
<dbReference type="Bgee" id="ENSMUSG00000047832">
    <property type="expression patterns" value="Expressed in presomitic mesoderm and 270 other cell types or tissues"/>
</dbReference>
<dbReference type="GO" id="GO:0005829">
    <property type="term" value="C:cytosol"/>
    <property type="evidence" value="ECO:0007669"/>
    <property type="project" value="Ensembl"/>
</dbReference>
<dbReference type="GO" id="GO:0005654">
    <property type="term" value="C:nucleoplasm"/>
    <property type="evidence" value="ECO:0007669"/>
    <property type="project" value="Ensembl"/>
</dbReference>
<dbReference type="GO" id="GO:0005634">
    <property type="term" value="C:nucleus"/>
    <property type="evidence" value="ECO:0000314"/>
    <property type="project" value="MGI"/>
</dbReference>
<dbReference type="GO" id="GO:0005886">
    <property type="term" value="C:plasma membrane"/>
    <property type="evidence" value="ECO:0007669"/>
    <property type="project" value="Ensembl"/>
</dbReference>
<dbReference type="InterPro" id="IPR052262">
    <property type="entry name" value="E2F-SERTA_domain_protein"/>
</dbReference>
<dbReference type="InterPro" id="IPR009263">
    <property type="entry name" value="SERTA_dom"/>
</dbReference>
<dbReference type="PANTHER" id="PTHR16277">
    <property type="entry name" value="CELL DIVISION CYCLE ASSOCIATED PROTEIN 4/SERTA DOMAIN-CONTAINING PROTEIN 2"/>
    <property type="match status" value="1"/>
</dbReference>
<dbReference type="PANTHER" id="PTHR16277:SF6">
    <property type="entry name" value="CELL DIVISION CYCLE-ASSOCIATED PROTEIN 4"/>
    <property type="match status" value="1"/>
</dbReference>
<dbReference type="Pfam" id="PF06031">
    <property type="entry name" value="SERTA"/>
    <property type="match status" value="1"/>
</dbReference>
<dbReference type="PROSITE" id="PS51053">
    <property type="entry name" value="SERTA"/>
    <property type="match status" value="1"/>
</dbReference>
<protein>
    <recommendedName>
        <fullName>Cell division cycle-associated protein 4</fullName>
    </recommendedName>
    <alternativeName>
        <fullName>Hematopoietic progenitor protein</fullName>
    </alternativeName>
</protein>
<organism>
    <name type="scientific">Mus musculus</name>
    <name type="common">Mouse</name>
    <dbReference type="NCBI Taxonomy" id="10090"/>
    <lineage>
        <taxon>Eukaryota</taxon>
        <taxon>Metazoa</taxon>
        <taxon>Chordata</taxon>
        <taxon>Craniata</taxon>
        <taxon>Vertebrata</taxon>
        <taxon>Euteleostomi</taxon>
        <taxon>Mammalia</taxon>
        <taxon>Eutheria</taxon>
        <taxon>Euarchontoglires</taxon>
        <taxon>Glires</taxon>
        <taxon>Rodentia</taxon>
        <taxon>Myomorpha</taxon>
        <taxon>Muroidea</taxon>
        <taxon>Muridae</taxon>
        <taxon>Murinae</taxon>
        <taxon>Mus</taxon>
        <taxon>Mus</taxon>
    </lineage>
</organism>
<name>CDCA4_MOUSE</name>
<evidence type="ECO:0000250" key="1"/>
<evidence type="ECO:0000255" key="2">
    <source>
        <dbReference type="PROSITE-ProRule" id="PRU00396"/>
    </source>
</evidence>
<evidence type="ECO:0000305" key="3"/>
<reference key="1">
    <citation type="journal article" date="2001" name="Blood Cells Mol. Dis.">
        <title>Cloning and characterization of HEPP, a novel gene expressed preferentially in hematopoietic progenitors and mature blood cells.</title>
        <authorList>
            <person name="Abdullah J.M."/>
            <person name="Jing X."/>
            <person name="Spassov D.S."/>
            <person name="Nachtman R.G."/>
            <person name="Jurecic R."/>
        </authorList>
    </citation>
    <scope>NUCLEOTIDE SEQUENCE [MRNA]</scope>
    <source>
        <strain>C57BL/6J</strain>
        <tissue>Bone marrow</tissue>
    </source>
</reference>
<reference key="2">
    <citation type="journal article" date="2005" name="Science">
        <title>The transcriptional landscape of the mammalian genome.</title>
        <authorList>
            <person name="Carninci P."/>
            <person name="Kasukawa T."/>
            <person name="Katayama S."/>
            <person name="Gough J."/>
            <person name="Frith M.C."/>
            <person name="Maeda N."/>
            <person name="Oyama R."/>
            <person name="Ravasi T."/>
            <person name="Lenhard B."/>
            <person name="Wells C."/>
            <person name="Kodzius R."/>
            <person name="Shimokawa K."/>
            <person name="Bajic V.B."/>
            <person name="Brenner S.E."/>
            <person name="Batalov S."/>
            <person name="Forrest A.R."/>
            <person name="Zavolan M."/>
            <person name="Davis M.J."/>
            <person name="Wilming L.G."/>
            <person name="Aidinis V."/>
            <person name="Allen J.E."/>
            <person name="Ambesi-Impiombato A."/>
            <person name="Apweiler R."/>
            <person name="Aturaliya R.N."/>
            <person name="Bailey T.L."/>
            <person name="Bansal M."/>
            <person name="Baxter L."/>
            <person name="Beisel K.W."/>
            <person name="Bersano T."/>
            <person name="Bono H."/>
            <person name="Chalk A.M."/>
            <person name="Chiu K.P."/>
            <person name="Choudhary V."/>
            <person name="Christoffels A."/>
            <person name="Clutterbuck D.R."/>
            <person name="Crowe M.L."/>
            <person name="Dalla E."/>
            <person name="Dalrymple B.P."/>
            <person name="de Bono B."/>
            <person name="Della Gatta G."/>
            <person name="di Bernardo D."/>
            <person name="Down T."/>
            <person name="Engstrom P."/>
            <person name="Fagiolini M."/>
            <person name="Faulkner G."/>
            <person name="Fletcher C.F."/>
            <person name="Fukushima T."/>
            <person name="Furuno M."/>
            <person name="Futaki S."/>
            <person name="Gariboldi M."/>
            <person name="Georgii-Hemming P."/>
            <person name="Gingeras T.R."/>
            <person name="Gojobori T."/>
            <person name="Green R.E."/>
            <person name="Gustincich S."/>
            <person name="Harbers M."/>
            <person name="Hayashi Y."/>
            <person name="Hensch T.K."/>
            <person name="Hirokawa N."/>
            <person name="Hill D."/>
            <person name="Huminiecki L."/>
            <person name="Iacono M."/>
            <person name="Ikeo K."/>
            <person name="Iwama A."/>
            <person name="Ishikawa T."/>
            <person name="Jakt M."/>
            <person name="Kanapin A."/>
            <person name="Katoh M."/>
            <person name="Kawasawa Y."/>
            <person name="Kelso J."/>
            <person name="Kitamura H."/>
            <person name="Kitano H."/>
            <person name="Kollias G."/>
            <person name="Krishnan S.P."/>
            <person name="Kruger A."/>
            <person name="Kummerfeld S.K."/>
            <person name="Kurochkin I.V."/>
            <person name="Lareau L.F."/>
            <person name="Lazarevic D."/>
            <person name="Lipovich L."/>
            <person name="Liu J."/>
            <person name="Liuni S."/>
            <person name="McWilliam S."/>
            <person name="Madan Babu M."/>
            <person name="Madera M."/>
            <person name="Marchionni L."/>
            <person name="Matsuda H."/>
            <person name="Matsuzawa S."/>
            <person name="Miki H."/>
            <person name="Mignone F."/>
            <person name="Miyake S."/>
            <person name="Morris K."/>
            <person name="Mottagui-Tabar S."/>
            <person name="Mulder N."/>
            <person name="Nakano N."/>
            <person name="Nakauchi H."/>
            <person name="Ng P."/>
            <person name="Nilsson R."/>
            <person name="Nishiguchi S."/>
            <person name="Nishikawa S."/>
            <person name="Nori F."/>
            <person name="Ohara O."/>
            <person name="Okazaki Y."/>
            <person name="Orlando V."/>
            <person name="Pang K.C."/>
            <person name="Pavan W.J."/>
            <person name="Pavesi G."/>
            <person name="Pesole G."/>
            <person name="Petrovsky N."/>
            <person name="Piazza S."/>
            <person name="Reed J."/>
            <person name="Reid J.F."/>
            <person name="Ring B.Z."/>
            <person name="Ringwald M."/>
            <person name="Rost B."/>
            <person name="Ruan Y."/>
            <person name="Salzberg S.L."/>
            <person name="Sandelin A."/>
            <person name="Schneider C."/>
            <person name="Schoenbach C."/>
            <person name="Sekiguchi K."/>
            <person name="Semple C.A."/>
            <person name="Seno S."/>
            <person name="Sessa L."/>
            <person name="Sheng Y."/>
            <person name="Shibata Y."/>
            <person name="Shimada H."/>
            <person name="Shimada K."/>
            <person name="Silva D."/>
            <person name="Sinclair B."/>
            <person name="Sperling S."/>
            <person name="Stupka E."/>
            <person name="Sugiura K."/>
            <person name="Sultana R."/>
            <person name="Takenaka Y."/>
            <person name="Taki K."/>
            <person name="Tammoja K."/>
            <person name="Tan S.L."/>
            <person name="Tang S."/>
            <person name="Taylor M.S."/>
            <person name="Tegner J."/>
            <person name="Teichmann S.A."/>
            <person name="Ueda H.R."/>
            <person name="van Nimwegen E."/>
            <person name="Verardo R."/>
            <person name="Wei C.L."/>
            <person name="Yagi K."/>
            <person name="Yamanishi H."/>
            <person name="Zabarovsky E."/>
            <person name="Zhu S."/>
            <person name="Zimmer A."/>
            <person name="Hide W."/>
            <person name="Bult C."/>
            <person name="Grimmond S.M."/>
            <person name="Teasdale R.D."/>
            <person name="Liu E.T."/>
            <person name="Brusic V."/>
            <person name="Quackenbush J."/>
            <person name="Wahlestedt C."/>
            <person name="Mattick J.S."/>
            <person name="Hume D.A."/>
            <person name="Kai C."/>
            <person name="Sasaki D."/>
            <person name="Tomaru Y."/>
            <person name="Fukuda S."/>
            <person name="Kanamori-Katayama M."/>
            <person name="Suzuki M."/>
            <person name="Aoki J."/>
            <person name="Arakawa T."/>
            <person name="Iida J."/>
            <person name="Imamura K."/>
            <person name="Itoh M."/>
            <person name="Kato T."/>
            <person name="Kawaji H."/>
            <person name="Kawagashira N."/>
            <person name="Kawashima T."/>
            <person name="Kojima M."/>
            <person name="Kondo S."/>
            <person name="Konno H."/>
            <person name="Nakano K."/>
            <person name="Ninomiya N."/>
            <person name="Nishio T."/>
            <person name="Okada M."/>
            <person name="Plessy C."/>
            <person name="Shibata K."/>
            <person name="Shiraki T."/>
            <person name="Suzuki S."/>
            <person name="Tagami M."/>
            <person name="Waki K."/>
            <person name="Watahiki A."/>
            <person name="Okamura-Oho Y."/>
            <person name="Suzuki H."/>
            <person name="Kawai J."/>
            <person name="Hayashizaki Y."/>
        </authorList>
    </citation>
    <scope>NUCLEOTIDE SEQUENCE [LARGE SCALE MRNA]</scope>
    <source>
        <strain>C57BL/6J</strain>
        <strain>NOD</strain>
        <tissue>Mesonephros</tissue>
        <tissue>Spleen</tissue>
    </source>
</reference>
<reference key="3">
    <citation type="journal article" date="2004" name="Genome Res.">
        <title>The status, quality, and expansion of the NIH full-length cDNA project: the Mammalian Gene Collection (MGC).</title>
        <authorList>
            <consortium name="The MGC Project Team"/>
        </authorList>
    </citation>
    <scope>NUCLEOTIDE SEQUENCE [LARGE SCALE MRNA]</scope>
    <source>
        <tissue>Eye</tissue>
        <tissue>Mammary tumor</tissue>
    </source>
</reference>
<comment type="function">
    <text evidence="1">May participate in the regulation of cell proliferation through the E2F/RB pathway (By similarity). May be involved in molecular regulation of hematopoietic stem cells and progenitor cell lineage commitment and differentiation.</text>
</comment>
<comment type="subcellular location">
    <subcellularLocation>
        <location evidence="1">Nucleus</location>
    </subcellularLocation>
</comment>
<comment type="tissue specificity">
    <text>Expressed preferentially in hematopoietic progenitors and mature blood cells. Expressed at low levels in the heart, lung, spleen, and thymus and at a higher level in muscle.</text>
</comment>
<comment type="developmental stage">
    <text>Developmentally regulated. Preferential expression in both fetal and adult hematopoietic progenitors and mature blood cells during embryonic and adult hematopoiesis.</text>
</comment>
<comment type="sequence caution" evidence="3">
    <conflict type="erroneous initiation">
        <sequence resource="EMBL-CDS" id="AAH12953"/>
    </conflict>
</comment>